<feature type="chain" id="PRO_1000067764" description="NADH-quinone oxidoreductase subunit I">
    <location>
        <begin position="1"/>
        <end position="162"/>
    </location>
</feature>
<feature type="domain" description="4Fe-4S ferredoxin-type 1" evidence="1">
    <location>
        <begin position="54"/>
        <end position="83"/>
    </location>
</feature>
<feature type="domain" description="4Fe-4S ferredoxin-type 2" evidence="1">
    <location>
        <begin position="93"/>
        <end position="122"/>
    </location>
</feature>
<feature type="binding site" evidence="1">
    <location>
        <position position="63"/>
    </location>
    <ligand>
        <name>[4Fe-4S] cluster</name>
        <dbReference type="ChEBI" id="CHEBI:49883"/>
        <label>1</label>
    </ligand>
</feature>
<feature type="binding site" evidence="1">
    <location>
        <position position="66"/>
    </location>
    <ligand>
        <name>[4Fe-4S] cluster</name>
        <dbReference type="ChEBI" id="CHEBI:49883"/>
        <label>1</label>
    </ligand>
</feature>
<feature type="binding site" evidence="1">
    <location>
        <position position="69"/>
    </location>
    <ligand>
        <name>[4Fe-4S] cluster</name>
        <dbReference type="ChEBI" id="CHEBI:49883"/>
        <label>1</label>
    </ligand>
</feature>
<feature type="binding site" evidence="1">
    <location>
        <position position="73"/>
    </location>
    <ligand>
        <name>[4Fe-4S] cluster</name>
        <dbReference type="ChEBI" id="CHEBI:49883"/>
        <label>2</label>
    </ligand>
</feature>
<feature type="binding site" evidence="1">
    <location>
        <position position="102"/>
    </location>
    <ligand>
        <name>[4Fe-4S] cluster</name>
        <dbReference type="ChEBI" id="CHEBI:49883"/>
        <label>2</label>
    </ligand>
</feature>
<feature type="binding site" evidence="1">
    <location>
        <position position="105"/>
    </location>
    <ligand>
        <name>[4Fe-4S] cluster</name>
        <dbReference type="ChEBI" id="CHEBI:49883"/>
        <label>2</label>
    </ligand>
</feature>
<feature type="binding site" evidence="1">
    <location>
        <position position="108"/>
    </location>
    <ligand>
        <name>[4Fe-4S] cluster</name>
        <dbReference type="ChEBI" id="CHEBI:49883"/>
        <label>2</label>
    </ligand>
</feature>
<feature type="binding site" evidence="1">
    <location>
        <position position="112"/>
    </location>
    <ligand>
        <name>[4Fe-4S] cluster</name>
        <dbReference type="ChEBI" id="CHEBI:49883"/>
        <label>1</label>
    </ligand>
</feature>
<protein>
    <recommendedName>
        <fullName evidence="1">NADH-quinone oxidoreductase subunit I</fullName>
        <ecNumber evidence="1">7.1.1.-</ecNumber>
    </recommendedName>
    <alternativeName>
        <fullName evidence="1">NADH dehydrogenase I subunit I</fullName>
    </alternativeName>
    <alternativeName>
        <fullName evidence="1">NDH-1 subunit I</fullName>
    </alternativeName>
</protein>
<dbReference type="EC" id="7.1.1.-" evidence="1"/>
<dbReference type="EMBL" id="CP000526">
    <property type="protein sequence ID" value="ABM51677.1"/>
    <property type="molecule type" value="Genomic_DNA"/>
</dbReference>
<dbReference type="RefSeq" id="WP_004186558.1">
    <property type="nucleotide sequence ID" value="NC_008785.1"/>
</dbReference>
<dbReference type="SMR" id="A1V2M4"/>
<dbReference type="GeneID" id="93059702"/>
<dbReference type="KEGG" id="bmv:BMASAVP1_A1138"/>
<dbReference type="HOGENOM" id="CLU_067218_5_1_4"/>
<dbReference type="GO" id="GO:0005886">
    <property type="term" value="C:plasma membrane"/>
    <property type="evidence" value="ECO:0007669"/>
    <property type="project" value="UniProtKB-SubCell"/>
</dbReference>
<dbReference type="GO" id="GO:0051539">
    <property type="term" value="F:4 iron, 4 sulfur cluster binding"/>
    <property type="evidence" value="ECO:0007669"/>
    <property type="project" value="UniProtKB-KW"/>
</dbReference>
<dbReference type="GO" id="GO:0005506">
    <property type="term" value="F:iron ion binding"/>
    <property type="evidence" value="ECO:0007669"/>
    <property type="project" value="UniProtKB-UniRule"/>
</dbReference>
<dbReference type="GO" id="GO:0050136">
    <property type="term" value="F:NADH:ubiquinone reductase (non-electrogenic) activity"/>
    <property type="evidence" value="ECO:0007669"/>
    <property type="project" value="UniProtKB-UniRule"/>
</dbReference>
<dbReference type="GO" id="GO:0048038">
    <property type="term" value="F:quinone binding"/>
    <property type="evidence" value="ECO:0007669"/>
    <property type="project" value="UniProtKB-KW"/>
</dbReference>
<dbReference type="GO" id="GO:0009060">
    <property type="term" value="P:aerobic respiration"/>
    <property type="evidence" value="ECO:0007669"/>
    <property type="project" value="TreeGrafter"/>
</dbReference>
<dbReference type="FunFam" id="3.30.70.3270:FF:000003">
    <property type="entry name" value="NADH-quinone oxidoreductase subunit I"/>
    <property type="match status" value="1"/>
</dbReference>
<dbReference type="Gene3D" id="3.30.70.3270">
    <property type="match status" value="1"/>
</dbReference>
<dbReference type="HAMAP" id="MF_01351">
    <property type="entry name" value="NDH1_NuoI"/>
    <property type="match status" value="1"/>
</dbReference>
<dbReference type="InterPro" id="IPR017896">
    <property type="entry name" value="4Fe4S_Fe-S-bd"/>
</dbReference>
<dbReference type="InterPro" id="IPR017900">
    <property type="entry name" value="4Fe4S_Fe_S_CS"/>
</dbReference>
<dbReference type="InterPro" id="IPR010226">
    <property type="entry name" value="NADH_quinone_OxRdtase_chainI"/>
</dbReference>
<dbReference type="NCBIfam" id="TIGR01971">
    <property type="entry name" value="NuoI"/>
    <property type="match status" value="1"/>
</dbReference>
<dbReference type="NCBIfam" id="NF004538">
    <property type="entry name" value="PRK05888.1-4"/>
    <property type="match status" value="1"/>
</dbReference>
<dbReference type="NCBIfam" id="NF004539">
    <property type="entry name" value="PRK05888.1-5"/>
    <property type="match status" value="1"/>
</dbReference>
<dbReference type="PANTHER" id="PTHR10849:SF20">
    <property type="entry name" value="NADH DEHYDROGENASE [UBIQUINONE] IRON-SULFUR PROTEIN 8, MITOCHONDRIAL"/>
    <property type="match status" value="1"/>
</dbReference>
<dbReference type="PANTHER" id="PTHR10849">
    <property type="entry name" value="NADH DEHYDROGENASE UBIQUINONE IRON-SULFUR PROTEIN 8, MITOCHONDRIAL"/>
    <property type="match status" value="1"/>
</dbReference>
<dbReference type="Pfam" id="PF12838">
    <property type="entry name" value="Fer4_7"/>
    <property type="match status" value="1"/>
</dbReference>
<dbReference type="SUPFAM" id="SSF54862">
    <property type="entry name" value="4Fe-4S ferredoxins"/>
    <property type="match status" value="1"/>
</dbReference>
<dbReference type="PROSITE" id="PS00198">
    <property type="entry name" value="4FE4S_FER_1"/>
    <property type="match status" value="2"/>
</dbReference>
<dbReference type="PROSITE" id="PS51379">
    <property type="entry name" value="4FE4S_FER_2"/>
    <property type="match status" value="2"/>
</dbReference>
<accession>A1V2M4</accession>
<evidence type="ECO:0000255" key="1">
    <source>
        <dbReference type="HAMAP-Rule" id="MF_01351"/>
    </source>
</evidence>
<comment type="function">
    <text evidence="1">NDH-1 shuttles electrons from NADH, via FMN and iron-sulfur (Fe-S) centers, to quinones in the respiratory chain. The immediate electron acceptor for the enzyme in this species is believed to be ubiquinone. Couples the redox reaction to proton translocation (for every two electrons transferred, four hydrogen ions are translocated across the cytoplasmic membrane), and thus conserves the redox energy in a proton gradient.</text>
</comment>
<comment type="catalytic activity">
    <reaction evidence="1">
        <text>a quinone + NADH + 5 H(+)(in) = a quinol + NAD(+) + 4 H(+)(out)</text>
        <dbReference type="Rhea" id="RHEA:57888"/>
        <dbReference type="ChEBI" id="CHEBI:15378"/>
        <dbReference type="ChEBI" id="CHEBI:24646"/>
        <dbReference type="ChEBI" id="CHEBI:57540"/>
        <dbReference type="ChEBI" id="CHEBI:57945"/>
        <dbReference type="ChEBI" id="CHEBI:132124"/>
    </reaction>
</comment>
<comment type="cofactor">
    <cofactor evidence="1">
        <name>[4Fe-4S] cluster</name>
        <dbReference type="ChEBI" id="CHEBI:49883"/>
    </cofactor>
    <text evidence="1">Binds 2 [4Fe-4S] clusters per subunit.</text>
</comment>
<comment type="subunit">
    <text evidence="1">NDH-1 is composed of 14 different subunits. Subunits NuoA, H, J, K, L, M, N constitute the membrane sector of the complex.</text>
</comment>
<comment type="subcellular location">
    <subcellularLocation>
        <location evidence="1">Cell inner membrane</location>
        <topology evidence="1">Peripheral membrane protein</topology>
    </subcellularLocation>
</comment>
<comment type="similarity">
    <text evidence="1">Belongs to the complex I 23 kDa subunit family.</text>
</comment>
<gene>
    <name evidence="1" type="primary">nuoI</name>
    <name type="ordered locus">BMASAVP1_A1138</name>
</gene>
<sequence>MTAIQQFFKTFFLTELLKGLALTGRYTFKRKFTVQFPEEKTPISPRFRGLHALRRYENGEERCIACKLCEAVCPALAITIESETRADNTRRTTRYDIDLTKCIFCGFCEESCPVDSIVETQILEYHGEKRGDLYFTKDMLLAVGDRYEKEIAAAKAADARYR</sequence>
<organism>
    <name type="scientific">Burkholderia mallei (strain SAVP1)</name>
    <dbReference type="NCBI Taxonomy" id="320388"/>
    <lineage>
        <taxon>Bacteria</taxon>
        <taxon>Pseudomonadati</taxon>
        <taxon>Pseudomonadota</taxon>
        <taxon>Betaproteobacteria</taxon>
        <taxon>Burkholderiales</taxon>
        <taxon>Burkholderiaceae</taxon>
        <taxon>Burkholderia</taxon>
        <taxon>pseudomallei group</taxon>
    </lineage>
</organism>
<proteinExistence type="inferred from homology"/>
<name>NUOI_BURMS</name>
<reference key="1">
    <citation type="journal article" date="2010" name="Genome Biol. Evol.">
        <title>Continuing evolution of Burkholderia mallei through genome reduction and large-scale rearrangements.</title>
        <authorList>
            <person name="Losada L."/>
            <person name="Ronning C.M."/>
            <person name="DeShazer D."/>
            <person name="Woods D."/>
            <person name="Fedorova N."/>
            <person name="Kim H.S."/>
            <person name="Shabalina S.A."/>
            <person name="Pearson T.R."/>
            <person name="Brinkac L."/>
            <person name="Tan P."/>
            <person name="Nandi T."/>
            <person name="Crabtree J."/>
            <person name="Badger J."/>
            <person name="Beckstrom-Sternberg S."/>
            <person name="Saqib M."/>
            <person name="Schutzer S.E."/>
            <person name="Keim P."/>
            <person name="Nierman W.C."/>
        </authorList>
    </citation>
    <scope>NUCLEOTIDE SEQUENCE [LARGE SCALE GENOMIC DNA]</scope>
    <source>
        <strain>SAVP1</strain>
    </source>
</reference>
<keyword id="KW-0004">4Fe-4S</keyword>
<keyword id="KW-0997">Cell inner membrane</keyword>
<keyword id="KW-1003">Cell membrane</keyword>
<keyword id="KW-0408">Iron</keyword>
<keyword id="KW-0411">Iron-sulfur</keyword>
<keyword id="KW-0472">Membrane</keyword>
<keyword id="KW-0479">Metal-binding</keyword>
<keyword id="KW-0520">NAD</keyword>
<keyword id="KW-0874">Quinone</keyword>
<keyword id="KW-0677">Repeat</keyword>
<keyword id="KW-1278">Translocase</keyword>
<keyword id="KW-0830">Ubiquinone</keyword>